<proteinExistence type="inferred from homology"/>
<organism>
    <name type="scientific">Bordetella avium (strain 197N)</name>
    <dbReference type="NCBI Taxonomy" id="360910"/>
    <lineage>
        <taxon>Bacteria</taxon>
        <taxon>Pseudomonadati</taxon>
        <taxon>Pseudomonadota</taxon>
        <taxon>Betaproteobacteria</taxon>
        <taxon>Burkholderiales</taxon>
        <taxon>Alcaligenaceae</taxon>
        <taxon>Bordetella</taxon>
    </lineage>
</organism>
<gene>
    <name evidence="1" type="primary">lipA</name>
    <name type="ordered locus">BAV0139</name>
</gene>
<protein>
    <recommendedName>
        <fullName evidence="1">Lipoyl synthase</fullName>
        <ecNumber evidence="1">2.8.1.8</ecNumber>
    </recommendedName>
    <alternativeName>
        <fullName evidence="1">Lip-syn</fullName>
        <shortName evidence="1">LS</shortName>
    </alternativeName>
    <alternativeName>
        <fullName evidence="1">Lipoate synthase</fullName>
    </alternativeName>
    <alternativeName>
        <fullName evidence="1">Lipoic acid synthase</fullName>
    </alternativeName>
    <alternativeName>
        <fullName evidence="1">Sulfur insertion protein LipA</fullName>
    </alternativeName>
</protein>
<keyword id="KW-0004">4Fe-4S</keyword>
<keyword id="KW-0963">Cytoplasm</keyword>
<keyword id="KW-0408">Iron</keyword>
<keyword id="KW-0411">Iron-sulfur</keyword>
<keyword id="KW-0479">Metal-binding</keyword>
<keyword id="KW-1185">Reference proteome</keyword>
<keyword id="KW-0949">S-adenosyl-L-methionine</keyword>
<keyword id="KW-0808">Transferase</keyword>
<reference key="1">
    <citation type="journal article" date="2006" name="J. Bacteriol.">
        <title>Comparison of the genome sequence of the poultry pathogen Bordetella avium with those of B. bronchiseptica, B. pertussis, and B. parapertussis reveals extensive diversity in surface structures associated with host interaction.</title>
        <authorList>
            <person name="Sebaihia M."/>
            <person name="Preston A."/>
            <person name="Maskell D.J."/>
            <person name="Kuzmiak H."/>
            <person name="Connell T.D."/>
            <person name="King N.D."/>
            <person name="Orndorff P.E."/>
            <person name="Miyamoto D.M."/>
            <person name="Thomson N.R."/>
            <person name="Harris D."/>
            <person name="Goble A."/>
            <person name="Lord A."/>
            <person name="Murphy L."/>
            <person name="Quail M.A."/>
            <person name="Rutter S."/>
            <person name="Squares R."/>
            <person name="Squares S."/>
            <person name="Woodward J."/>
            <person name="Parkhill J."/>
            <person name="Temple L.M."/>
        </authorList>
    </citation>
    <scope>NUCLEOTIDE SEQUENCE [LARGE SCALE GENOMIC DNA]</scope>
    <source>
        <strain>197N</strain>
    </source>
</reference>
<dbReference type="EC" id="2.8.1.8" evidence="1"/>
<dbReference type="EMBL" id="AM167904">
    <property type="protein sequence ID" value="CAJ47745.1"/>
    <property type="molecule type" value="Genomic_DNA"/>
</dbReference>
<dbReference type="RefSeq" id="WP_012415843.1">
    <property type="nucleotide sequence ID" value="NC_010645.1"/>
</dbReference>
<dbReference type="SMR" id="Q2L1D8"/>
<dbReference type="STRING" id="360910.BAV0139"/>
<dbReference type="GeneID" id="92936615"/>
<dbReference type="KEGG" id="bav:BAV0139"/>
<dbReference type="eggNOG" id="COG0320">
    <property type="taxonomic scope" value="Bacteria"/>
</dbReference>
<dbReference type="HOGENOM" id="CLU_033144_2_1_4"/>
<dbReference type="OrthoDB" id="9787898at2"/>
<dbReference type="UniPathway" id="UPA00538">
    <property type="reaction ID" value="UER00593"/>
</dbReference>
<dbReference type="Proteomes" id="UP000001977">
    <property type="component" value="Chromosome"/>
</dbReference>
<dbReference type="GO" id="GO:0005737">
    <property type="term" value="C:cytoplasm"/>
    <property type="evidence" value="ECO:0007669"/>
    <property type="project" value="UniProtKB-SubCell"/>
</dbReference>
<dbReference type="GO" id="GO:0051539">
    <property type="term" value="F:4 iron, 4 sulfur cluster binding"/>
    <property type="evidence" value="ECO:0007669"/>
    <property type="project" value="UniProtKB-UniRule"/>
</dbReference>
<dbReference type="GO" id="GO:0016992">
    <property type="term" value="F:lipoate synthase activity"/>
    <property type="evidence" value="ECO:0007669"/>
    <property type="project" value="UniProtKB-UniRule"/>
</dbReference>
<dbReference type="GO" id="GO:0046872">
    <property type="term" value="F:metal ion binding"/>
    <property type="evidence" value="ECO:0007669"/>
    <property type="project" value="UniProtKB-KW"/>
</dbReference>
<dbReference type="CDD" id="cd01335">
    <property type="entry name" value="Radical_SAM"/>
    <property type="match status" value="1"/>
</dbReference>
<dbReference type="FunFam" id="3.20.20.70:FF:000040">
    <property type="entry name" value="Lipoyl synthase"/>
    <property type="match status" value="1"/>
</dbReference>
<dbReference type="Gene3D" id="3.20.20.70">
    <property type="entry name" value="Aldolase class I"/>
    <property type="match status" value="1"/>
</dbReference>
<dbReference type="HAMAP" id="MF_00206">
    <property type="entry name" value="Lipoyl_synth"/>
    <property type="match status" value="1"/>
</dbReference>
<dbReference type="InterPro" id="IPR013785">
    <property type="entry name" value="Aldolase_TIM"/>
</dbReference>
<dbReference type="InterPro" id="IPR006638">
    <property type="entry name" value="Elp3/MiaA/NifB-like_rSAM"/>
</dbReference>
<dbReference type="InterPro" id="IPR031691">
    <property type="entry name" value="LIAS_N"/>
</dbReference>
<dbReference type="InterPro" id="IPR003698">
    <property type="entry name" value="Lipoyl_synth"/>
</dbReference>
<dbReference type="InterPro" id="IPR007197">
    <property type="entry name" value="rSAM"/>
</dbReference>
<dbReference type="NCBIfam" id="TIGR00510">
    <property type="entry name" value="lipA"/>
    <property type="match status" value="1"/>
</dbReference>
<dbReference type="NCBIfam" id="NF004019">
    <property type="entry name" value="PRK05481.1"/>
    <property type="match status" value="1"/>
</dbReference>
<dbReference type="NCBIfam" id="NF009544">
    <property type="entry name" value="PRK12928.1"/>
    <property type="match status" value="1"/>
</dbReference>
<dbReference type="PANTHER" id="PTHR10949">
    <property type="entry name" value="LIPOYL SYNTHASE"/>
    <property type="match status" value="1"/>
</dbReference>
<dbReference type="PANTHER" id="PTHR10949:SF0">
    <property type="entry name" value="LIPOYL SYNTHASE, MITOCHONDRIAL"/>
    <property type="match status" value="1"/>
</dbReference>
<dbReference type="Pfam" id="PF16881">
    <property type="entry name" value="LIAS_N"/>
    <property type="match status" value="1"/>
</dbReference>
<dbReference type="Pfam" id="PF04055">
    <property type="entry name" value="Radical_SAM"/>
    <property type="match status" value="1"/>
</dbReference>
<dbReference type="PIRSF" id="PIRSF005963">
    <property type="entry name" value="Lipoyl_synth"/>
    <property type="match status" value="1"/>
</dbReference>
<dbReference type="SFLD" id="SFLDF00271">
    <property type="entry name" value="lipoyl_synthase"/>
    <property type="match status" value="1"/>
</dbReference>
<dbReference type="SFLD" id="SFLDS00029">
    <property type="entry name" value="Radical_SAM"/>
    <property type="match status" value="1"/>
</dbReference>
<dbReference type="SMART" id="SM00729">
    <property type="entry name" value="Elp3"/>
    <property type="match status" value="1"/>
</dbReference>
<dbReference type="SUPFAM" id="SSF102114">
    <property type="entry name" value="Radical SAM enzymes"/>
    <property type="match status" value="1"/>
</dbReference>
<dbReference type="PROSITE" id="PS51918">
    <property type="entry name" value="RADICAL_SAM"/>
    <property type="match status" value="1"/>
</dbReference>
<accession>Q2L1D8</accession>
<evidence type="ECO:0000255" key="1">
    <source>
        <dbReference type="HAMAP-Rule" id="MF_00206"/>
    </source>
</evidence>
<evidence type="ECO:0000255" key="2">
    <source>
        <dbReference type="PROSITE-ProRule" id="PRU01266"/>
    </source>
</evidence>
<evidence type="ECO:0000256" key="3">
    <source>
        <dbReference type="SAM" id="MobiDB-lite"/>
    </source>
</evidence>
<sequence>MSTQLDASQPSNDVASPAAYDPTQKQKSQAKTARIPIKVIPAERLKKPEWIRVRAAAPGSRFYDIKRILREHNLHTVCEEASCPNIGECFGKGTATFMIMGDKCTRRCPFCDVGHGRPDPLDAQEPENLARTIAALKLSYVVITSVDRDDLRDGGAAHFVECITKIRELSPITRIEVLVPDFRGRLDRALAILNAGPPDVMNHNLETVPRLYKQARPGSDYLHSLKLLAEFKALHPDVPTKSGLMLGLGETDEEILEVMRDMRAHNVDMITIGQYLQPSEHHLPVLRYVHPDTFAMFEREAYAMGFSHAAVGAMVRSSYHADEQAHAAGVN</sequence>
<feature type="chain" id="PRO_1000012191" description="Lipoyl synthase">
    <location>
        <begin position="1"/>
        <end position="331"/>
    </location>
</feature>
<feature type="domain" description="Radical SAM core" evidence="2">
    <location>
        <begin position="89"/>
        <end position="307"/>
    </location>
</feature>
<feature type="region of interest" description="Disordered" evidence="3">
    <location>
        <begin position="1"/>
        <end position="32"/>
    </location>
</feature>
<feature type="compositionally biased region" description="Polar residues" evidence="3">
    <location>
        <begin position="1"/>
        <end position="14"/>
    </location>
</feature>
<feature type="binding site" evidence="1">
    <location>
        <position position="78"/>
    </location>
    <ligand>
        <name>[4Fe-4S] cluster</name>
        <dbReference type="ChEBI" id="CHEBI:49883"/>
        <label>1</label>
    </ligand>
</feature>
<feature type="binding site" evidence="1">
    <location>
        <position position="83"/>
    </location>
    <ligand>
        <name>[4Fe-4S] cluster</name>
        <dbReference type="ChEBI" id="CHEBI:49883"/>
        <label>1</label>
    </ligand>
</feature>
<feature type="binding site" evidence="1">
    <location>
        <position position="89"/>
    </location>
    <ligand>
        <name>[4Fe-4S] cluster</name>
        <dbReference type="ChEBI" id="CHEBI:49883"/>
        <label>1</label>
    </ligand>
</feature>
<feature type="binding site" evidence="1">
    <location>
        <position position="104"/>
    </location>
    <ligand>
        <name>[4Fe-4S] cluster</name>
        <dbReference type="ChEBI" id="CHEBI:49883"/>
        <label>2</label>
        <note>4Fe-4S-S-AdoMet</note>
    </ligand>
</feature>
<feature type="binding site" evidence="1">
    <location>
        <position position="108"/>
    </location>
    <ligand>
        <name>[4Fe-4S] cluster</name>
        <dbReference type="ChEBI" id="CHEBI:49883"/>
        <label>2</label>
        <note>4Fe-4S-S-AdoMet</note>
    </ligand>
</feature>
<feature type="binding site" evidence="1">
    <location>
        <position position="111"/>
    </location>
    <ligand>
        <name>[4Fe-4S] cluster</name>
        <dbReference type="ChEBI" id="CHEBI:49883"/>
        <label>2</label>
        <note>4Fe-4S-S-AdoMet</note>
    </ligand>
</feature>
<feature type="binding site" evidence="1">
    <location>
        <position position="318"/>
    </location>
    <ligand>
        <name>[4Fe-4S] cluster</name>
        <dbReference type="ChEBI" id="CHEBI:49883"/>
        <label>1</label>
    </ligand>
</feature>
<comment type="function">
    <text evidence="1">Catalyzes the radical-mediated insertion of two sulfur atoms into the C-6 and C-8 positions of the octanoyl moiety bound to the lipoyl domains of lipoate-dependent enzymes, thereby converting the octanoylated domains into lipoylated derivatives.</text>
</comment>
<comment type="catalytic activity">
    <reaction evidence="1">
        <text>[[Fe-S] cluster scaffold protein carrying a second [4Fe-4S](2+) cluster] + N(6)-octanoyl-L-lysyl-[protein] + 2 oxidized [2Fe-2S]-[ferredoxin] + 2 S-adenosyl-L-methionine + 4 H(+) = [[Fe-S] cluster scaffold protein] + N(6)-[(R)-dihydrolipoyl]-L-lysyl-[protein] + 4 Fe(3+) + 2 hydrogen sulfide + 2 5'-deoxyadenosine + 2 L-methionine + 2 reduced [2Fe-2S]-[ferredoxin]</text>
        <dbReference type="Rhea" id="RHEA:16585"/>
        <dbReference type="Rhea" id="RHEA-COMP:9928"/>
        <dbReference type="Rhea" id="RHEA-COMP:10000"/>
        <dbReference type="Rhea" id="RHEA-COMP:10001"/>
        <dbReference type="Rhea" id="RHEA-COMP:10475"/>
        <dbReference type="Rhea" id="RHEA-COMP:14568"/>
        <dbReference type="Rhea" id="RHEA-COMP:14569"/>
        <dbReference type="ChEBI" id="CHEBI:15378"/>
        <dbReference type="ChEBI" id="CHEBI:17319"/>
        <dbReference type="ChEBI" id="CHEBI:29034"/>
        <dbReference type="ChEBI" id="CHEBI:29919"/>
        <dbReference type="ChEBI" id="CHEBI:33722"/>
        <dbReference type="ChEBI" id="CHEBI:33737"/>
        <dbReference type="ChEBI" id="CHEBI:33738"/>
        <dbReference type="ChEBI" id="CHEBI:57844"/>
        <dbReference type="ChEBI" id="CHEBI:59789"/>
        <dbReference type="ChEBI" id="CHEBI:78809"/>
        <dbReference type="ChEBI" id="CHEBI:83100"/>
        <dbReference type="EC" id="2.8.1.8"/>
    </reaction>
</comment>
<comment type="cofactor">
    <cofactor evidence="1">
        <name>[4Fe-4S] cluster</name>
        <dbReference type="ChEBI" id="CHEBI:49883"/>
    </cofactor>
    <text evidence="1">Binds 2 [4Fe-4S] clusters per subunit. One cluster is coordinated with 3 cysteines and an exchangeable S-adenosyl-L-methionine.</text>
</comment>
<comment type="pathway">
    <text evidence="1">Protein modification; protein lipoylation via endogenous pathway; protein N(6)-(lipoyl)lysine from octanoyl-[acyl-carrier-protein]: step 2/2.</text>
</comment>
<comment type="subcellular location">
    <subcellularLocation>
        <location evidence="1">Cytoplasm</location>
    </subcellularLocation>
</comment>
<comment type="similarity">
    <text evidence="1">Belongs to the radical SAM superfamily. Lipoyl synthase family.</text>
</comment>
<name>LIPA_BORA1</name>